<keyword id="KW-0436">Ligase</keyword>
<keyword id="KW-0547">Nucleotide-binding</keyword>
<keyword id="KW-0816">Tricarboxylic acid cycle</keyword>
<proteinExistence type="inferred from homology"/>
<gene>
    <name evidence="1" type="primary">sucD</name>
    <name type="ordered locus">SACOL1263</name>
</gene>
<dbReference type="EC" id="6.2.1.5" evidence="1"/>
<dbReference type="EMBL" id="CP000046">
    <property type="protein sequence ID" value="AAW38095.1"/>
    <property type="molecule type" value="Genomic_DNA"/>
</dbReference>
<dbReference type="RefSeq" id="WP_000110253.1">
    <property type="nucleotide sequence ID" value="NZ_JBGOFO010000002.1"/>
</dbReference>
<dbReference type="SMR" id="Q5HGI6"/>
<dbReference type="GeneID" id="98345561"/>
<dbReference type="KEGG" id="sac:SACOL1263"/>
<dbReference type="HOGENOM" id="CLU_052104_0_0_9"/>
<dbReference type="UniPathway" id="UPA00223">
    <property type="reaction ID" value="UER00999"/>
</dbReference>
<dbReference type="Proteomes" id="UP000000530">
    <property type="component" value="Chromosome"/>
</dbReference>
<dbReference type="GO" id="GO:0005829">
    <property type="term" value="C:cytosol"/>
    <property type="evidence" value="ECO:0007669"/>
    <property type="project" value="TreeGrafter"/>
</dbReference>
<dbReference type="GO" id="GO:0009361">
    <property type="term" value="C:succinate-CoA ligase complex (ADP-forming)"/>
    <property type="evidence" value="ECO:0007669"/>
    <property type="project" value="TreeGrafter"/>
</dbReference>
<dbReference type="GO" id="GO:0000166">
    <property type="term" value="F:nucleotide binding"/>
    <property type="evidence" value="ECO:0007669"/>
    <property type="project" value="UniProtKB-KW"/>
</dbReference>
<dbReference type="GO" id="GO:0004775">
    <property type="term" value="F:succinate-CoA ligase (ADP-forming) activity"/>
    <property type="evidence" value="ECO:0007669"/>
    <property type="project" value="UniProtKB-UniRule"/>
</dbReference>
<dbReference type="GO" id="GO:0004776">
    <property type="term" value="F:succinate-CoA ligase (GDP-forming) activity"/>
    <property type="evidence" value="ECO:0007669"/>
    <property type="project" value="TreeGrafter"/>
</dbReference>
<dbReference type="GO" id="GO:0006099">
    <property type="term" value="P:tricarboxylic acid cycle"/>
    <property type="evidence" value="ECO:0007669"/>
    <property type="project" value="UniProtKB-UniRule"/>
</dbReference>
<dbReference type="FunFam" id="3.40.50.261:FF:000002">
    <property type="entry name" value="Succinate--CoA ligase [ADP-forming] subunit alpha"/>
    <property type="match status" value="1"/>
</dbReference>
<dbReference type="FunFam" id="3.40.50.720:FF:000002">
    <property type="entry name" value="Succinate--CoA ligase [ADP-forming] subunit alpha"/>
    <property type="match status" value="1"/>
</dbReference>
<dbReference type="Gene3D" id="3.40.50.720">
    <property type="entry name" value="NAD(P)-binding Rossmann-like Domain"/>
    <property type="match status" value="1"/>
</dbReference>
<dbReference type="Gene3D" id="3.40.50.261">
    <property type="entry name" value="Succinyl-CoA synthetase domains"/>
    <property type="match status" value="1"/>
</dbReference>
<dbReference type="HAMAP" id="MF_01988">
    <property type="entry name" value="Succ_CoA_alpha"/>
    <property type="match status" value="1"/>
</dbReference>
<dbReference type="InterPro" id="IPR017440">
    <property type="entry name" value="Cit_synth/succinyl-CoA_lig_AS"/>
</dbReference>
<dbReference type="InterPro" id="IPR033847">
    <property type="entry name" value="Citrt_syn/SCS-alpha_CS"/>
</dbReference>
<dbReference type="InterPro" id="IPR003781">
    <property type="entry name" value="CoA-bd"/>
</dbReference>
<dbReference type="InterPro" id="IPR005810">
    <property type="entry name" value="CoA_lig_alpha"/>
</dbReference>
<dbReference type="InterPro" id="IPR036291">
    <property type="entry name" value="NAD(P)-bd_dom_sf"/>
</dbReference>
<dbReference type="InterPro" id="IPR005811">
    <property type="entry name" value="SUCC_ACL_C"/>
</dbReference>
<dbReference type="InterPro" id="IPR016102">
    <property type="entry name" value="Succinyl-CoA_synth-like"/>
</dbReference>
<dbReference type="NCBIfam" id="NF004230">
    <property type="entry name" value="PRK05678.1"/>
    <property type="match status" value="1"/>
</dbReference>
<dbReference type="NCBIfam" id="TIGR01019">
    <property type="entry name" value="sucCoAalpha"/>
    <property type="match status" value="1"/>
</dbReference>
<dbReference type="PANTHER" id="PTHR11117:SF2">
    <property type="entry name" value="SUCCINATE--COA LIGASE [ADP_GDP-FORMING] SUBUNIT ALPHA, MITOCHONDRIAL"/>
    <property type="match status" value="1"/>
</dbReference>
<dbReference type="PANTHER" id="PTHR11117">
    <property type="entry name" value="SUCCINYL-COA LIGASE SUBUNIT ALPHA"/>
    <property type="match status" value="1"/>
</dbReference>
<dbReference type="Pfam" id="PF02629">
    <property type="entry name" value="CoA_binding"/>
    <property type="match status" value="1"/>
</dbReference>
<dbReference type="Pfam" id="PF00549">
    <property type="entry name" value="Ligase_CoA"/>
    <property type="match status" value="1"/>
</dbReference>
<dbReference type="PIRSF" id="PIRSF001553">
    <property type="entry name" value="SucCS_alpha"/>
    <property type="match status" value="1"/>
</dbReference>
<dbReference type="PRINTS" id="PR01798">
    <property type="entry name" value="SCOASYNTHASE"/>
</dbReference>
<dbReference type="SMART" id="SM00881">
    <property type="entry name" value="CoA_binding"/>
    <property type="match status" value="1"/>
</dbReference>
<dbReference type="SUPFAM" id="SSF51735">
    <property type="entry name" value="NAD(P)-binding Rossmann-fold domains"/>
    <property type="match status" value="1"/>
</dbReference>
<dbReference type="SUPFAM" id="SSF52210">
    <property type="entry name" value="Succinyl-CoA synthetase domains"/>
    <property type="match status" value="1"/>
</dbReference>
<dbReference type="PROSITE" id="PS01216">
    <property type="entry name" value="SUCCINYL_COA_LIG_1"/>
    <property type="match status" value="1"/>
</dbReference>
<dbReference type="PROSITE" id="PS00399">
    <property type="entry name" value="SUCCINYL_COA_LIG_2"/>
    <property type="match status" value="1"/>
</dbReference>
<reference key="1">
    <citation type="journal article" date="2005" name="J. Bacteriol.">
        <title>Insights on evolution of virulence and resistance from the complete genome analysis of an early methicillin-resistant Staphylococcus aureus strain and a biofilm-producing methicillin-resistant Staphylococcus epidermidis strain.</title>
        <authorList>
            <person name="Gill S.R."/>
            <person name="Fouts D.E."/>
            <person name="Archer G.L."/>
            <person name="Mongodin E.F."/>
            <person name="DeBoy R.T."/>
            <person name="Ravel J."/>
            <person name="Paulsen I.T."/>
            <person name="Kolonay J.F."/>
            <person name="Brinkac L.M."/>
            <person name="Beanan M.J."/>
            <person name="Dodson R.J."/>
            <person name="Daugherty S.C."/>
            <person name="Madupu R."/>
            <person name="Angiuoli S.V."/>
            <person name="Durkin A.S."/>
            <person name="Haft D.H."/>
            <person name="Vamathevan J.J."/>
            <person name="Khouri H."/>
            <person name="Utterback T.R."/>
            <person name="Lee C."/>
            <person name="Dimitrov G."/>
            <person name="Jiang L."/>
            <person name="Qin H."/>
            <person name="Weidman J."/>
            <person name="Tran K."/>
            <person name="Kang K.H."/>
            <person name="Hance I.R."/>
            <person name="Nelson K.E."/>
            <person name="Fraser C.M."/>
        </authorList>
    </citation>
    <scope>NUCLEOTIDE SEQUENCE [LARGE SCALE GENOMIC DNA]</scope>
    <source>
        <strain>COL</strain>
    </source>
</reference>
<feature type="chain" id="PRO_0000102799" description="Succinate--CoA ligase [ADP-forming] subunit alpha">
    <location>
        <begin position="1"/>
        <end position="302"/>
    </location>
</feature>
<feature type="active site" description="Tele-phosphohistidine intermediate" evidence="1">
    <location>
        <position position="247"/>
    </location>
</feature>
<feature type="binding site" evidence="1">
    <location>
        <begin position="17"/>
        <end position="20"/>
    </location>
    <ligand>
        <name>CoA</name>
        <dbReference type="ChEBI" id="CHEBI:57287"/>
    </ligand>
</feature>
<feature type="binding site" evidence="1">
    <location>
        <position position="43"/>
    </location>
    <ligand>
        <name>CoA</name>
        <dbReference type="ChEBI" id="CHEBI:57287"/>
    </ligand>
</feature>
<feature type="binding site" evidence="1">
    <location>
        <begin position="96"/>
        <end position="98"/>
    </location>
    <ligand>
        <name>CoA</name>
        <dbReference type="ChEBI" id="CHEBI:57287"/>
    </ligand>
</feature>
<feature type="binding site" evidence="1">
    <location>
        <position position="159"/>
    </location>
    <ligand>
        <name>substrate</name>
        <note>ligand shared with subunit beta</note>
    </ligand>
</feature>
<evidence type="ECO:0000255" key="1">
    <source>
        <dbReference type="HAMAP-Rule" id="MF_01988"/>
    </source>
</evidence>
<comment type="function">
    <text evidence="1">Succinyl-CoA synthetase functions in the citric acid cycle (TCA), coupling the hydrolysis of succinyl-CoA to the synthesis of either ATP or GTP and thus represents the only step of substrate-level phosphorylation in the TCA. The alpha subunit of the enzyme binds the substrates coenzyme A and phosphate, while succinate binding and nucleotide specificity is provided by the beta subunit.</text>
</comment>
<comment type="catalytic activity">
    <reaction evidence="1">
        <text>succinate + ATP + CoA = succinyl-CoA + ADP + phosphate</text>
        <dbReference type="Rhea" id="RHEA:17661"/>
        <dbReference type="ChEBI" id="CHEBI:30031"/>
        <dbReference type="ChEBI" id="CHEBI:30616"/>
        <dbReference type="ChEBI" id="CHEBI:43474"/>
        <dbReference type="ChEBI" id="CHEBI:57287"/>
        <dbReference type="ChEBI" id="CHEBI:57292"/>
        <dbReference type="ChEBI" id="CHEBI:456216"/>
        <dbReference type="EC" id="6.2.1.5"/>
    </reaction>
    <physiologicalReaction direction="right-to-left" evidence="1">
        <dbReference type="Rhea" id="RHEA:17663"/>
    </physiologicalReaction>
</comment>
<comment type="catalytic activity">
    <reaction evidence="1">
        <text>GTP + succinate + CoA = succinyl-CoA + GDP + phosphate</text>
        <dbReference type="Rhea" id="RHEA:22120"/>
        <dbReference type="ChEBI" id="CHEBI:30031"/>
        <dbReference type="ChEBI" id="CHEBI:37565"/>
        <dbReference type="ChEBI" id="CHEBI:43474"/>
        <dbReference type="ChEBI" id="CHEBI:57287"/>
        <dbReference type="ChEBI" id="CHEBI:57292"/>
        <dbReference type="ChEBI" id="CHEBI:58189"/>
    </reaction>
    <physiologicalReaction direction="right-to-left" evidence="1">
        <dbReference type="Rhea" id="RHEA:22122"/>
    </physiologicalReaction>
</comment>
<comment type="pathway">
    <text evidence="1">Carbohydrate metabolism; tricarboxylic acid cycle; succinate from succinyl-CoA (ligase route): step 1/1.</text>
</comment>
<comment type="subunit">
    <text evidence="1">Heterotetramer of two alpha and two beta subunits.</text>
</comment>
<comment type="similarity">
    <text evidence="1">Belongs to the succinate/malate CoA ligase alpha subunit family.</text>
</comment>
<organism>
    <name type="scientific">Staphylococcus aureus (strain COL)</name>
    <dbReference type="NCBI Taxonomy" id="93062"/>
    <lineage>
        <taxon>Bacteria</taxon>
        <taxon>Bacillati</taxon>
        <taxon>Bacillota</taxon>
        <taxon>Bacilli</taxon>
        <taxon>Bacillales</taxon>
        <taxon>Staphylococcaceae</taxon>
        <taxon>Staphylococcus</taxon>
    </lineage>
</organism>
<sequence length="302" mass="31542">MSVFIDKNTKVMVQGITGSTALFHTKQMLDYGTKIVAGVTPGKGGQVVEGVPVFNTVEEAKNETGATVSVIYVPAPFAADSILEAADADLDMVICITEHIPVLDMVKVKRYLQGRKTRLVGPNCPGVITADECKIGIMPGYIHKKGHVGVVSRSGTLTYEAVHQLTEEGIGQTTAVGIGGDPVNGTNFIDVLKAFNEDDETKAVVMIGEIGGTAEEEAAEWIKANMTKPVVGFIGGQTAPPGKRMGHAGAIISGGKGTAEEKIKTLNSCGVKTAATPSEIGSTLIEAAKEAGIYESLLTVNK</sequence>
<accession>Q5HGI6</accession>
<protein>
    <recommendedName>
        <fullName evidence="1">Succinate--CoA ligase [ADP-forming] subunit alpha</fullName>
        <ecNumber evidence="1">6.2.1.5</ecNumber>
    </recommendedName>
    <alternativeName>
        <fullName evidence="1">Succinyl-CoA synthetase subunit alpha</fullName>
        <shortName evidence="1">SCS-alpha</shortName>
    </alternativeName>
</protein>
<name>SUCD_STAAC</name>